<gene>
    <name type="primary">csd</name>
    <name type="ordered locus">MG336</name>
</gene>
<dbReference type="EC" id="2.8.1.7"/>
<dbReference type="EMBL" id="L43967">
    <property type="protein sequence ID" value="AAC71561.1"/>
    <property type="molecule type" value="Genomic_DNA"/>
</dbReference>
<dbReference type="EMBL" id="U02256">
    <property type="protein sequence ID" value="AAD12521.1"/>
    <property type="molecule type" value="Genomic_DNA"/>
</dbReference>
<dbReference type="PIR" id="B64237">
    <property type="entry name" value="B64237"/>
</dbReference>
<dbReference type="RefSeq" id="WP_010869440.1">
    <property type="nucleotide sequence ID" value="NC_000908.2"/>
</dbReference>
<dbReference type="SMR" id="Q49420"/>
<dbReference type="FunCoup" id="Q49420">
    <property type="interactions" value="175"/>
</dbReference>
<dbReference type="STRING" id="243273.MG_336"/>
<dbReference type="GeneID" id="88282511"/>
<dbReference type="KEGG" id="mge:MG_336"/>
<dbReference type="eggNOG" id="COG0520">
    <property type="taxonomic scope" value="Bacteria"/>
</dbReference>
<dbReference type="HOGENOM" id="CLU_003433_2_5_14"/>
<dbReference type="InParanoid" id="Q49420"/>
<dbReference type="OrthoDB" id="9804366at2"/>
<dbReference type="BioCyc" id="MGEN243273:G1GJ2-420-MONOMER"/>
<dbReference type="Proteomes" id="UP000000807">
    <property type="component" value="Chromosome"/>
</dbReference>
<dbReference type="GO" id="GO:0031071">
    <property type="term" value="F:cysteine desulfurase activity"/>
    <property type="evidence" value="ECO:0007669"/>
    <property type="project" value="UniProtKB-EC"/>
</dbReference>
<dbReference type="Gene3D" id="3.90.1150.10">
    <property type="entry name" value="Aspartate Aminotransferase, domain 1"/>
    <property type="match status" value="1"/>
</dbReference>
<dbReference type="Gene3D" id="3.40.640.10">
    <property type="entry name" value="Type I PLP-dependent aspartate aminotransferase-like (Major domain)"/>
    <property type="match status" value="1"/>
</dbReference>
<dbReference type="InterPro" id="IPR000192">
    <property type="entry name" value="Aminotrans_V_dom"/>
</dbReference>
<dbReference type="InterPro" id="IPR020578">
    <property type="entry name" value="Aminotrans_V_PyrdxlP_BS"/>
</dbReference>
<dbReference type="InterPro" id="IPR015424">
    <property type="entry name" value="PyrdxlP-dep_Trfase"/>
</dbReference>
<dbReference type="InterPro" id="IPR015421">
    <property type="entry name" value="PyrdxlP-dep_Trfase_major"/>
</dbReference>
<dbReference type="InterPro" id="IPR015422">
    <property type="entry name" value="PyrdxlP-dep_Trfase_small"/>
</dbReference>
<dbReference type="PANTHER" id="PTHR43586">
    <property type="entry name" value="CYSTEINE DESULFURASE"/>
    <property type="match status" value="1"/>
</dbReference>
<dbReference type="PANTHER" id="PTHR43586:SF8">
    <property type="entry name" value="CYSTEINE DESULFURASE 1, CHLOROPLASTIC"/>
    <property type="match status" value="1"/>
</dbReference>
<dbReference type="Pfam" id="PF00266">
    <property type="entry name" value="Aminotran_5"/>
    <property type="match status" value="1"/>
</dbReference>
<dbReference type="SUPFAM" id="SSF53383">
    <property type="entry name" value="PLP-dependent transferases"/>
    <property type="match status" value="1"/>
</dbReference>
<dbReference type="PROSITE" id="PS00595">
    <property type="entry name" value="AA_TRANSFER_CLASS_5"/>
    <property type="match status" value="1"/>
</dbReference>
<accession>Q49420</accession>
<accession>Q49361</accession>
<organism>
    <name type="scientific">Mycoplasma genitalium (strain ATCC 33530 / DSM 19775 / NCTC 10195 / G37)</name>
    <name type="common">Mycoplasmoides genitalium</name>
    <dbReference type="NCBI Taxonomy" id="243273"/>
    <lineage>
        <taxon>Bacteria</taxon>
        <taxon>Bacillati</taxon>
        <taxon>Mycoplasmatota</taxon>
        <taxon>Mycoplasmoidales</taxon>
        <taxon>Mycoplasmoidaceae</taxon>
        <taxon>Mycoplasmoides</taxon>
    </lineage>
</organism>
<feature type="chain" id="PRO_0000150299" description="Probable cysteine desulfurase">
    <location>
        <begin position="1"/>
        <end position="408"/>
    </location>
</feature>
<feature type="modified residue" description="N6-(pyridoxal phosphate)lysine" evidence="1">
    <location>
        <position position="225"/>
    </location>
</feature>
<sequence length="408" mass="46618">MSAIKFNPSSFRKNFKWFENNKNWINFDNAATSIALDVVAEASKEYYQYFCVNPHNKNPEINQKLIAIIEETRDLLAKFFNAKKNEIIFTSSATESLNLFAFGLSSLVKSNDEIILKEDEHAANVFPWVNLAKENKAKLKIIKKTPNKSWTDAFLKACTPSTKLLVITATSNLFGNSIDYEKISKHLKKISPNSFIVVDAVQAVPHHKIDITSANIDFLTFSTHKFYGPTGLGIAFIKSELQSRLKPFKLGGDIFKSLDNNFKIIFKEGPSKFEAGTLNIMAIYALNKQLKFMQKEFNFSEMVFYSKQLKNLAYQLLSQNPNIVLANHDQDVPIFAFKHKYINSADLATFLNIKKIIVRQGSICVGKFKNKESFLRVSLLHYNTKEELLYLEKLLKTSKNSIINELIY</sequence>
<protein>
    <recommendedName>
        <fullName>Probable cysteine desulfurase</fullName>
        <ecNumber>2.8.1.7</ecNumber>
    </recommendedName>
</protein>
<name>CSD_MYCGE</name>
<comment type="function">
    <text evidence="1">Catalyzes the removal of elemental sulfur and selenium atoms from L-cysteine, L-cystine, L-selenocysteine, and L-selenocystine to produce L-alanine.</text>
</comment>
<comment type="catalytic activity">
    <reaction>
        <text>(sulfur carrier)-H + L-cysteine = (sulfur carrier)-SH + L-alanine</text>
        <dbReference type="Rhea" id="RHEA:43892"/>
        <dbReference type="Rhea" id="RHEA-COMP:14737"/>
        <dbReference type="Rhea" id="RHEA-COMP:14739"/>
        <dbReference type="ChEBI" id="CHEBI:29917"/>
        <dbReference type="ChEBI" id="CHEBI:35235"/>
        <dbReference type="ChEBI" id="CHEBI:57972"/>
        <dbReference type="ChEBI" id="CHEBI:64428"/>
        <dbReference type="EC" id="2.8.1.7"/>
    </reaction>
</comment>
<comment type="cofactor">
    <cofactor evidence="1">
        <name>pyridoxal 5'-phosphate</name>
        <dbReference type="ChEBI" id="CHEBI:597326"/>
    </cofactor>
</comment>
<comment type="similarity">
    <text evidence="2">Belongs to the class-V pyridoxal-phosphate-dependent aminotransferase family. Csd subfamily.</text>
</comment>
<reference key="1">
    <citation type="journal article" date="1995" name="Science">
        <title>The minimal gene complement of Mycoplasma genitalium.</title>
        <authorList>
            <person name="Fraser C.M."/>
            <person name="Gocayne J.D."/>
            <person name="White O."/>
            <person name="Adams M.D."/>
            <person name="Clayton R.A."/>
            <person name="Fleischmann R.D."/>
            <person name="Bult C.J."/>
            <person name="Kerlavage A.R."/>
            <person name="Sutton G.G."/>
            <person name="Kelley J.M."/>
            <person name="Fritchman J.L."/>
            <person name="Weidman J.F."/>
            <person name="Small K.V."/>
            <person name="Sandusky M."/>
            <person name="Fuhrmann J.L."/>
            <person name="Nguyen D.T."/>
            <person name="Utterback T.R."/>
            <person name="Saudek D.M."/>
            <person name="Phillips C.A."/>
            <person name="Merrick J.M."/>
            <person name="Tomb J.-F."/>
            <person name="Dougherty B.A."/>
            <person name="Bott K.F."/>
            <person name="Hu P.-C."/>
            <person name="Lucier T.S."/>
            <person name="Peterson S.N."/>
            <person name="Smith H.O."/>
            <person name="Hutchison C.A. III"/>
            <person name="Venter J.C."/>
        </authorList>
    </citation>
    <scope>NUCLEOTIDE SEQUENCE [LARGE SCALE GENOMIC DNA]</scope>
    <source>
        <strain>ATCC 33530 / DSM 19775 / NCTC 10195 / G37</strain>
    </source>
</reference>
<reference key="2">
    <citation type="journal article" date="1993" name="J. Bacteriol.">
        <title>A survey of the Mycoplasma genitalium genome by using random sequencing.</title>
        <authorList>
            <person name="Peterson S.N."/>
            <person name="Hu P.-C."/>
            <person name="Bott K.F."/>
            <person name="Hutchison C.A. III"/>
        </authorList>
    </citation>
    <scope>NUCLEOTIDE SEQUENCE [GENOMIC DNA] OF 241-330</scope>
    <source>
        <strain>ATCC 33530 / DSM 19775 / NCTC 10195 / G37</strain>
    </source>
</reference>
<keyword id="KW-0663">Pyridoxal phosphate</keyword>
<keyword id="KW-1185">Reference proteome</keyword>
<keyword id="KW-0808">Transferase</keyword>
<evidence type="ECO:0000250" key="1"/>
<evidence type="ECO:0000305" key="2"/>
<proteinExistence type="inferred from homology"/>